<evidence type="ECO:0000255" key="1">
    <source>
        <dbReference type="HAMAP-Rule" id="MF_01411"/>
    </source>
</evidence>
<evidence type="ECO:0000256" key="2">
    <source>
        <dbReference type="SAM" id="MobiDB-lite"/>
    </source>
</evidence>
<gene>
    <name evidence="1" type="primary">lptD</name>
    <name type="synonym">imp</name>
    <name type="synonym">ostA</name>
    <name type="ordered locus">Psyr_4624</name>
</gene>
<keyword id="KW-0998">Cell outer membrane</keyword>
<keyword id="KW-0472">Membrane</keyword>
<keyword id="KW-0732">Signal</keyword>
<feature type="signal peptide" evidence="1">
    <location>
        <begin position="1"/>
        <end position="22"/>
    </location>
</feature>
<feature type="chain" id="PRO_5000001281" description="LPS-assembly protein LptD">
    <location>
        <begin position="23"/>
        <end position="926"/>
    </location>
</feature>
<feature type="region of interest" description="Disordered" evidence="2">
    <location>
        <begin position="55"/>
        <end position="91"/>
    </location>
</feature>
<feature type="compositionally biased region" description="Low complexity" evidence="2">
    <location>
        <begin position="68"/>
        <end position="91"/>
    </location>
</feature>
<accession>Q4ZMG8</accession>
<protein>
    <recommendedName>
        <fullName evidence="1">LPS-assembly protein LptD</fullName>
    </recommendedName>
</protein>
<proteinExistence type="inferred from homology"/>
<comment type="function">
    <text evidence="1">Together with LptE, is involved in the assembly of lipopolysaccharide (LPS) at the surface of the outer membrane.</text>
</comment>
<comment type="subunit">
    <text evidence="1">Component of the lipopolysaccharide transport and assembly complex. Interacts with LptE and LptA.</text>
</comment>
<comment type="subcellular location">
    <subcellularLocation>
        <location evidence="1">Cell outer membrane</location>
    </subcellularLocation>
</comment>
<comment type="similarity">
    <text evidence="1">Belongs to the LptD family.</text>
</comment>
<name>LPTD_PSEU2</name>
<reference key="1">
    <citation type="journal article" date="2005" name="Proc. Natl. Acad. Sci. U.S.A.">
        <title>Comparison of the complete genome sequences of Pseudomonas syringae pv. syringae B728a and pv. tomato DC3000.</title>
        <authorList>
            <person name="Feil H."/>
            <person name="Feil W.S."/>
            <person name="Chain P."/>
            <person name="Larimer F."/>
            <person name="Dibartolo G."/>
            <person name="Copeland A."/>
            <person name="Lykidis A."/>
            <person name="Trong S."/>
            <person name="Nolan M."/>
            <person name="Goltsman E."/>
            <person name="Thiel J."/>
            <person name="Malfatti S."/>
            <person name="Loper J.E."/>
            <person name="Lapidus A."/>
            <person name="Detter J.C."/>
            <person name="Land M."/>
            <person name="Richardson P.M."/>
            <person name="Kyrpides N.C."/>
            <person name="Ivanova N."/>
            <person name="Lindow S.E."/>
        </authorList>
    </citation>
    <scope>NUCLEOTIDE SEQUENCE [LARGE SCALE GENOMIC DNA]</scope>
    <source>
        <strain>B728a</strain>
    </source>
</reference>
<organism>
    <name type="scientific">Pseudomonas syringae pv. syringae (strain B728a)</name>
    <dbReference type="NCBI Taxonomy" id="205918"/>
    <lineage>
        <taxon>Bacteria</taxon>
        <taxon>Pseudomonadati</taxon>
        <taxon>Pseudomonadota</taxon>
        <taxon>Gammaproteobacteria</taxon>
        <taxon>Pseudomonadales</taxon>
        <taxon>Pseudomonadaceae</taxon>
        <taxon>Pseudomonas</taxon>
        <taxon>Pseudomonas syringae</taxon>
    </lineage>
</organism>
<sequence>MALKSPAFRKKFPLLVTGSLLAMQPLATQFVVAAEQYDCSVSASGAWNCAPKSNAAAVDLPPRPVHDTTSVSSNGTVTSQGTSSGEQSAGTQLVTEAKGKGLKSRSADYSHLDWVPREKLTAAQLAETGPYCSGAYVEPIRPGMDDKTPMKDAPMFVGAKASRYEQDAQVATLAGDVVMRQGSMQVQAQEAALHQAENRGELNGDVRLRDNGALIVGDKAELQLDTGEARVDNAEYVLHKSNIRGNALYAKRAENAIIRLKDGTYTTCEPNSNAWTLKGNNITLNPATGFGTATNVTLRVKDIPVLYTPYIYFPIDDRRQSGFLPPTIAAGGDNGFTLVTPYYFNLAPNYDATLYPRYMADRGLLMEGEFRYLTKGSEGQFGGAYLNDENDDRKQQSDYDKTRWMINWQHKGGLDTRWLTQVDYTDISDPYYFQDLETDQIGVKRTDFLNQQGSLTYRGDSFSAVLNAQAYKLATVANVTPYNRLPQLTLNGTLPYNPGGLKFDYQTEAVRFERDLRSGAFIDEDGNSETRLDNNISGLARANGDRLNLAPSVSLPMNWTYGFLTPKLKYVYTQYDLDLDSQGKNTLLAGEEYSSSQSRSVPIFSVDSGLYFDRNTNWFGKDYRQTLEPRLFYLYVPEKDQTDIPVFDTSESTFNYASLFRDNRFTGSDRIGDENKLSLGVTNRWIEDNGFERQRFSIGQALYFEDRKVQLPGVVFADRDDARSNVSPYALEYEYRFNRDWRFNSDFNWDPDSRSTRSGSAMFHYQPEDNPNKVVNLGYRYRNDQIRYDESTGRWVVGGGDYGTPGSPNYVKDYYKIQQHDFSVIWPIVPQWSLISRWQYDYNRERTIEAFGGFEYDNCCWKMRLVNRYWIDYDEFSQAAPQNEKGDRGIFLQIVLKGLGGVTGAKVDSFLDKGIQGYREREDQAF</sequence>
<dbReference type="EMBL" id="CP000075">
    <property type="protein sequence ID" value="AAY39654.1"/>
    <property type="molecule type" value="Genomic_DNA"/>
</dbReference>
<dbReference type="RefSeq" id="WP_011269131.1">
    <property type="nucleotide sequence ID" value="NC_007005.1"/>
</dbReference>
<dbReference type="RefSeq" id="YP_237692.1">
    <property type="nucleotide sequence ID" value="NC_007005.1"/>
</dbReference>
<dbReference type="SMR" id="Q4ZMG8"/>
<dbReference type="STRING" id="205918.Psyr_4624"/>
<dbReference type="KEGG" id="psb:Psyr_4624"/>
<dbReference type="PATRIC" id="fig|205918.7.peg.4769"/>
<dbReference type="eggNOG" id="COG1452">
    <property type="taxonomic scope" value="Bacteria"/>
</dbReference>
<dbReference type="HOGENOM" id="CLU_009039_1_0_6"/>
<dbReference type="OrthoDB" id="9760225at2"/>
<dbReference type="Proteomes" id="UP000000426">
    <property type="component" value="Chromosome"/>
</dbReference>
<dbReference type="GO" id="GO:0009279">
    <property type="term" value="C:cell outer membrane"/>
    <property type="evidence" value="ECO:0007669"/>
    <property type="project" value="UniProtKB-SubCell"/>
</dbReference>
<dbReference type="GO" id="GO:1990351">
    <property type="term" value="C:transporter complex"/>
    <property type="evidence" value="ECO:0007669"/>
    <property type="project" value="TreeGrafter"/>
</dbReference>
<dbReference type="GO" id="GO:0043165">
    <property type="term" value="P:Gram-negative-bacterium-type cell outer membrane assembly"/>
    <property type="evidence" value="ECO:0007669"/>
    <property type="project" value="UniProtKB-UniRule"/>
</dbReference>
<dbReference type="GO" id="GO:0015920">
    <property type="term" value="P:lipopolysaccharide transport"/>
    <property type="evidence" value="ECO:0007669"/>
    <property type="project" value="InterPro"/>
</dbReference>
<dbReference type="Gene3D" id="2.60.450.10">
    <property type="entry name" value="Lipopolysaccharide (LPS) transport protein A like domain"/>
    <property type="match status" value="1"/>
</dbReference>
<dbReference type="HAMAP" id="MF_01411">
    <property type="entry name" value="LPS_assembly_LptD"/>
    <property type="match status" value="1"/>
</dbReference>
<dbReference type="InterPro" id="IPR020889">
    <property type="entry name" value="LipoPS_assembly_LptD"/>
</dbReference>
<dbReference type="InterPro" id="IPR050218">
    <property type="entry name" value="LptD"/>
</dbReference>
<dbReference type="InterPro" id="IPR007543">
    <property type="entry name" value="LptD_C"/>
</dbReference>
<dbReference type="InterPro" id="IPR005653">
    <property type="entry name" value="OstA-like_N"/>
</dbReference>
<dbReference type="PANTHER" id="PTHR30189">
    <property type="entry name" value="LPS-ASSEMBLY PROTEIN"/>
    <property type="match status" value="1"/>
</dbReference>
<dbReference type="PANTHER" id="PTHR30189:SF1">
    <property type="entry name" value="LPS-ASSEMBLY PROTEIN LPTD"/>
    <property type="match status" value="1"/>
</dbReference>
<dbReference type="Pfam" id="PF04453">
    <property type="entry name" value="LptD"/>
    <property type="match status" value="1"/>
</dbReference>
<dbReference type="Pfam" id="PF03968">
    <property type="entry name" value="LptD_N"/>
    <property type="match status" value="1"/>
</dbReference>